<feature type="chain" id="PRO_1000005334" description="Small ribosomal subunit protein bS6">
    <location>
        <begin position="1"/>
        <end position="132"/>
    </location>
</feature>
<feature type="region of interest" description="Disordered" evidence="2">
    <location>
        <begin position="96"/>
        <end position="132"/>
    </location>
</feature>
<feature type="compositionally biased region" description="Basic and acidic residues" evidence="2">
    <location>
        <begin position="105"/>
        <end position="132"/>
    </location>
</feature>
<protein>
    <recommendedName>
        <fullName evidence="1">Small ribosomal subunit protein bS6</fullName>
    </recommendedName>
    <alternativeName>
        <fullName evidence="3">30S ribosomal protein S6</fullName>
    </alternativeName>
</protein>
<proteinExistence type="inferred from homology"/>
<reference key="1">
    <citation type="submission" date="2007-04" db="EMBL/GenBank/DDBJ databases">
        <title>Complete sequence of chromosome of Rhodobacter sphaeroides ATCC 17025.</title>
        <authorList>
            <consortium name="US DOE Joint Genome Institute"/>
            <person name="Copeland A."/>
            <person name="Lucas S."/>
            <person name="Lapidus A."/>
            <person name="Barry K."/>
            <person name="Detter J.C."/>
            <person name="Glavina del Rio T."/>
            <person name="Hammon N."/>
            <person name="Israni S."/>
            <person name="Dalin E."/>
            <person name="Tice H."/>
            <person name="Pitluck S."/>
            <person name="Chertkov O."/>
            <person name="Brettin T."/>
            <person name="Bruce D."/>
            <person name="Han C."/>
            <person name="Schmutz J."/>
            <person name="Larimer F."/>
            <person name="Land M."/>
            <person name="Hauser L."/>
            <person name="Kyrpides N."/>
            <person name="Kim E."/>
            <person name="Richardson P."/>
            <person name="Mackenzie C."/>
            <person name="Choudhary M."/>
            <person name="Donohue T.J."/>
            <person name="Kaplan S."/>
        </authorList>
    </citation>
    <scope>NUCLEOTIDE SEQUENCE [LARGE SCALE GENOMIC DNA]</scope>
    <source>
        <strain>ATCC 17025 / ATH 2.4.3</strain>
    </source>
</reference>
<gene>
    <name evidence="1" type="primary">rpsF</name>
    <name type="ordered locus">Rsph17025_1352</name>
</gene>
<organism>
    <name type="scientific">Cereibacter sphaeroides (strain ATCC 17025 / ATH 2.4.3)</name>
    <name type="common">Rhodobacter sphaeroides</name>
    <dbReference type="NCBI Taxonomy" id="349102"/>
    <lineage>
        <taxon>Bacteria</taxon>
        <taxon>Pseudomonadati</taxon>
        <taxon>Pseudomonadota</taxon>
        <taxon>Alphaproteobacteria</taxon>
        <taxon>Rhodobacterales</taxon>
        <taxon>Paracoccaceae</taxon>
        <taxon>Cereibacter</taxon>
    </lineage>
</organism>
<keyword id="KW-0687">Ribonucleoprotein</keyword>
<keyword id="KW-0689">Ribosomal protein</keyword>
<keyword id="KW-0694">RNA-binding</keyword>
<keyword id="KW-0699">rRNA-binding</keyword>
<name>RS6_CERS5</name>
<dbReference type="EMBL" id="CP000661">
    <property type="protein sequence ID" value="ABP70249.1"/>
    <property type="molecule type" value="Genomic_DNA"/>
</dbReference>
<dbReference type="SMR" id="A4WS85"/>
<dbReference type="STRING" id="349102.Rsph17025_1352"/>
<dbReference type="KEGG" id="rsq:Rsph17025_1352"/>
<dbReference type="eggNOG" id="COG0360">
    <property type="taxonomic scope" value="Bacteria"/>
</dbReference>
<dbReference type="HOGENOM" id="CLU_113441_2_0_5"/>
<dbReference type="BioCyc" id="RSPH349102:G1G8M-1390-MONOMER"/>
<dbReference type="GO" id="GO:0022627">
    <property type="term" value="C:cytosolic small ribosomal subunit"/>
    <property type="evidence" value="ECO:0007669"/>
    <property type="project" value="TreeGrafter"/>
</dbReference>
<dbReference type="GO" id="GO:0070181">
    <property type="term" value="F:small ribosomal subunit rRNA binding"/>
    <property type="evidence" value="ECO:0007669"/>
    <property type="project" value="TreeGrafter"/>
</dbReference>
<dbReference type="GO" id="GO:0003735">
    <property type="term" value="F:structural constituent of ribosome"/>
    <property type="evidence" value="ECO:0007669"/>
    <property type="project" value="InterPro"/>
</dbReference>
<dbReference type="GO" id="GO:0006412">
    <property type="term" value="P:translation"/>
    <property type="evidence" value="ECO:0007669"/>
    <property type="project" value="UniProtKB-UniRule"/>
</dbReference>
<dbReference type="CDD" id="cd00473">
    <property type="entry name" value="bS6"/>
    <property type="match status" value="1"/>
</dbReference>
<dbReference type="Gene3D" id="3.30.70.60">
    <property type="match status" value="1"/>
</dbReference>
<dbReference type="HAMAP" id="MF_00360">
    <property type="entry name" value="Ribosomal_bS6"/>
    <property type="match status" value="1"/>
</dbReference>
<dbReference type="InterPro" id="IPR000529">
    <property type="entry name" value="Ribosomal_bS6"/>
</dbReference>
<dbReference type="InterPro" id="IPR035980">
    <property type="entry name" value="Ribosomal_bS6_sf"/>
</dbReference>
<dbReference type="InterPro" id="IPR020814">
    <property type="entry name" value="Ribosomal_S6_plastid/chlpt"/>
</dbReference>
<dbReference type="InterPro" id="IPR014717">
    <property type="entry name" value="Transl_elong_EF1B/ribsomal_bS6"/>
</dbReference>
<dbReference type="NCBIfam" id="TIGR00166">
    <property type="entry name" value="S6"/>
    <property type="match status" value="1"/>
</dbReference>
<dbReference type="PANTHER" id="PTHR21011">
    <property type="entry name" value="MITOCHONDRIAL 28S RIBOSOMAL PROTEIN S6"/>
    <property type="match status" value="1"/>
</dbReference>
<dbReference type="PANTHER" id="PTHR21011:SF1">
    <property type="entry name" value="SMALL RIBOSOMAL SUBUNIT PROTEIN BS6M"/>
    <property type="match status" value="1"/>
</dbReference>
<dbReference type="Pfam" id="PF01250">
    <property type="entry name" value="Ribosomal_S6"/>
    <property type="match status" value="1"/>
</dbReference>
<dbReference type="SUPFAM" id="SSF54995">
    <property type="entry name" value="Ribosomal protein S6"/>
    <property type="match status" value="1"/>
</dbReference>
<sequence>MPLYEHVFISRQDLSNAQAEGLIEHFSTVLADNGGKVVDREYWGVKTMAYKINKNRKGHYAFLKSDAPSAAVQEMERLMRLHDDVMRVLTIKVDKHAEGPSIQMQKRDERERGDRGDRPDRGDRGERGGFRR</sequence>
<comment type="function">
    <text evidence="1">Binds together with bS18 to 16S ribosomal RNA.</text>
</comment>
<comment type="similarity">
    <text evidence="1">Belongs to the bacterial ribosomal protein bS6 family.</text>
</comment>
<evidence type="ECO:0000255" key="1">
    <source>
        <dbReference type="HAMAP-Rule" id="MF_00360"/>
    </source>
</evidence>
<evidence type="ECO:0000256" key="2">
    <source>
        <dbReference type="SAM" id="MobiDB-lite"/>
    </source>
</evidence>
<evidence type="ECO:0000305" key="3"/>
<accession>A4WS85</accession>